<sequence length="334" mass="37855">MTKVVVCALYKFVSLPHFESIRAPLLAMMEQAEIKGTLLLASEGINGTVAGTQEAIEALLLWLNSQNGLDNIVHKLSFDDEMPFYRTKVKLKNEIVTMGVEGIDPLKVVGTYVKPQDWNALISDPDVILVDTRNDYEVQIGTFKNAVNPVTETFREFPEYVKQNLDPAKHKKVAMFCTGGIRCEKSTAYLKEQGFDEVYHLEGGILKYLEEVKAEESLWEGECFVFDNRVAVNHDLKKGQYDQCNACRMPITEAEKQSPAYVQGVSCPHCIDKISDEQRKRFVERERQVNLAKARNEAHIGSDVNQVIEARREKKEAQRRLAAEKNNAKKSQVL</sequence>
<proteinExistence type="inferred from homology"/>
<keyword id="KW-0560">Oxidoreductase</keyword>
<keyword id="KW-0819">tRNA processing</keyword>
<feature type="chain" id="PRO_1000013770" description="tRNA uridine(34) hydroxylase">
    <location>
        <begin position="1"/>
        <end position="334"/>
    </location>
</feature>
<feature type="domain" description="Rhodanese" evidence="1">
    <location>
        <begin position="123"/>
        <end position="217"/>
    </location>
</feature>
<feature type="active site" description="Cysteine persulfide intermediate" evidence="1">
    <location>
        <position position="177"/>
    </location>
</feature>
<gene>
    <name evidence="1" type="primary">trhO</name>
    <name type="ordered locus">Shew185_2366</name>
</gene>
<name>TRHO_SHEB8</name>
<dbReference type="EC" id="1.14.-.-" evidence="1"/>
<dbReference type="EMBL" id="CP000753">
    <property type="protein sequence ID" value="ABS08504.1"/>
    <property type="molecule type" value="Genomic_DNA"/>
</dbReference>
<dbReference type="RefSeq" id="WP_006081837.1">
    <property type="nucleotide sequence ID" value="NC_009665.1"/>
</dbReference>
<dbReference type="SMR" id="A6WNW5"/>
<dbReference type="KEGG" id="sbm:Shew185_2366"/>
<dbReference type="HOGENOM" id="CLU_038878_0_0_6"/>
<dbReference type="GO" id="GO:0016705">
    <property type="term" value="F:oxidoreductase activity, acting on paired donors, with incorporation or reduction of molecular oxygen"/>
    <property type="evidence" value="ECO:0007669"/>
    <property type="project" value="UniProtKB-UniRule"/>
</dbReference>
<dbReference type="GO" id="GO:0006400">
    <property type="term" value="P:tRNA modification"/>
    <property type="evidence" value="ECO:0007669"/>
    <property type="project" value="UniProtKB-UniRule"/>
</dbReference>
<dbReference type="CDD" id="cd01518">
    <property type="entry name" value="RHOD_YceA"/>
    <property type="match status" value="1"/>
</dbReference>
<dbReference type="Gene3D" id="3.30.70.100">
    <property type="match status" value="1"/>
</dbReference>
<dbReference type="Gene3D" id="3.40.250.10">
    <property type="entry name" value="Rhodanese-like domain"/>
    <property type="match status" value="1"/>
</dbReference>
<dbReference type="HAMAP" id="MF_00469">
    <property type="entry name" value="TrhO"/>
    <property type="match status" value="1"/>
</dbReference>
<dbReference type="InterPro" id="IPR001763">
    <property type="entry name" value="Rhodanese-like_dom"/>
</dbReference>
<dbReference type="InterPro" id="IPR036873">
    <property type="entry name" value="Rhodanese-like_dom_sf"/>
</dbReference>
<dbReference type="InterPro" id="IPR020936">
    <property type="entry name" value="TrhO"/>
</dbReference>
<dbReference type="InterPro" id="IPR040503">
    <property type="entry name" value="TRHO_N"/>
</dbReference>
<dbReference type="NCBIfam" id="NF001136">
    <property type="entry name" value="PRK00142.1-4"/>
    <property type="match status" value="1"/>
</dbReference>
<dbReference type="PANTHER" id="PTHR43268:SF3">
    <property type="entry name" value="RHODANESE-LIKE DOMAIN-CONTAINING PROTEIN 7-RELATED"/>
    <property type="match status" value="1"/>
</dbReference>
<dbReference type="PANTHER" id="PTHR43268">
    <property type="entry name" value="THIOSULFATE SULFURTRANSFERASE/RHODANESE-LIKE DOMAIN-CONTAINING PROTEIN 2"/>
    <property type="match status" value="1"/>
</dbReference>
<dbReference type="Pfam" id="PF00581">
    <property type="entry name" value="Rhodanese"/>
    <property type="match status" value="1"/>
</dbReference>
<dbReference type="Pfam" id="PF17773">
    <property type="entry name" value="UPF0176_N"/>
    <property type="match status" value="1"/>
</dbReference>
<dbReference type="SMART" id="SM00450">
    <property type="entry name" value="RHOD"/>
    <property type="match status" value="1"/>
</dbReference>
<dbReference type="SUPFAM" id="SSF52821">
    <property type="entry name" value="Rhodanese/Cell cycle control phosphatase"/>
    <property type="match status" value="1"/>
</dbReference>
<dbReference type="PROSITE" id="PS50206">
    <property type="entry name" value="RHODANESE_3"/>
    <property type="match status" value="1"/>
</dbReference>
<protein>
    <recommendedName>
        <fullName evidence="1">tRNA uridine(34) hydroxylase</fullName>
        <ecNumber evidence="1">1.14.-.-</ecNumber>
    </recommendedName>
    <alternativeName>
        <fullName evidence="1">tRNA hydroxylation protein O</fullName>
    </alternativeName>
</protein>
<evidence type="ECO:0000255" key="1">
    <source>
        <dbReference type="HAMAP-Rule" id="MF_00469"/>
    </source>
</evidence>
<comment type="function">
    <text evidence="1">Catalyzes oxygen-dependent 5-hydroxyuridine (ho5U) modification at position 34 in tRNAs.</text>
</comment>
<comment type="catalytic activity">
    <reaction evidence="1">
        <text>uridine(34) in tRNA + AH2 + O2 = 5-hydroxyuridine(34) in tRNA + A + H2O</text>
        <dbReference type="Rhea" id="RHEA:64224"/>
        <dbReference type="Rhea" id="RHEA-COMP:11727"/>
        <dbReference type="Rhea" id="RHEA-COMP:13381"/>
        <dbReference type="ChEBI" id="CHEBI:13193"/>
        <dbReference type="ChEBI" id="CHEBI:15377"/>
        <dbReference type="ChEBI" id="CHEBI:15379"/>
        <dbReference type="ChEBI" id="CHEBI:17499"/>
        <dbReference type="ChEBI" id="CHEBI:65315"/>
        <dbReference type="ChEBI" id="CHEBI:136877"/>
    </reaction>
</comment>
<comment type="similarity">
    <text evidence="1">Belongs to the TrhO family.</text>
</comment>
<reference key="1">
    <citation type="submission" date="2007-07" db="EMBL/GenBank/DDBJ databases">
        <title>Complete sequence of chromosome of Shewanella baltica OS185.</title>
        <authorList>
            <consortium name="US DOE Joint Genome Institute"/>
            <person name="Copeland A."/>
            <person name="Lucas S."/>
            <person name="Lapidus A."/>
            <person name="Barry K."/>
            <person name="Glavina del Rio T."/>
            <person name="Dalin E."/>
            <person name="Tice H."/>
            <person name="Pitluck S."/>
            <person name="Sims D."/>
            <person name="Brettin T."/>
            <person name="Bruce D."/>
            <person name="Detter J.C."/>
            <person name="Han C."/>
            <person name="Schmutz J."/>
            <person name="Larimer F."/>
            <person name="Land M."/>
            <person name="Hauser L."/>
            <person name="Kyrpides N."/>
            <person name="Mikhailova N."/>
            <person name="Brettar I."/>
            <person name="Rodrigues J."/>
            <person name="Konstantinidis K."/>
            <person name="Tiedje J."/>
            <person name="Richardson P."/>
        </authorList>
    </citation>
    <scope>NUCLEOTIDE SEQUENCE [LARGE SCALE GENOMIC DNA]</scope>
    <source>
        <strain>OS185</strain>
    </source>
</reference>
<accession>A6WNW5</accession>
<organism>
    <name type="scientific">Shewanella baltica (strain OS185)</name>
    <dbReference type="NCBI Taxonomy" id="402882"/>
    <lineage>
        <taxon>Bacteria</taxon>
        <taxon>Pseudomonadati</taxon>
        <taxon>Pseudomonadota</taxon>
        <taxon>Gammaproteobacteria</taxon>
        <taxon>Alteromonadales</taxon>
        <taxon>Shewanellaceae</taxon>
        <taxon>Shewanella</taxon>
    </lineage>
</organism>